<sequence length="119" mass="13413">MFKKNDRSQSRERRHMRVRKKIFGTAERPRLSVYRSEKHIYAQLIDDVEGKTLVAASSSEKGFDGVGSNKEGAKLVGKMIAEKALEKGLKKVVFDRGGFIYHGRIKELAEGAREAGLDF</sequence>
<dbReference type="EMBL" id="CP000962">
    <property type="protein sequence ID" value="ACA53686.1"/>
    <property type="molecule type" value="Genomic_DNA"/>
</dbReference>
<dbReference type="RefSeq" id="WP_012341884.1">
    <property type="nucleotide sequence ID" value="NC_010520.1"/>
</dbReference>
<dbReference type="SMR" id="B1KSK9"/>
<dbReference type="KEGG" id="cbl:CLK_2908"/>
<dbReference type="HOGENOM" id="CLU_098841_0_1_9"/>
<dbReference type="GO" id="GO:0022625">
    <property type="term" value="C:cytosolic large ribosomal subunit"/>
    <property type="evidence" value="ECO:0007669"/>
    <property type="project" value="TreeGrafter"/>
</dbReference>
<dbReference type="GO" id="GO:0008097">
    <property type="term" value="F:5S rRNA binding"/>
    <property type="evidence" value="ECO:0007669"/>
    <property type="project" value="TreeGrafter"/>
</dbReference>
<dbReference type="GO" id="GO:0003735">
    <property type="term" value="F:structural constituent of ribosome"/>
    <property type="evidence" value="ECO:0007669"/>
    <property type="project" value="InterPro"/>
</dbReference>
<dbReference type="GO" id="GO:0006412">
    <property type="term" value="P:translation"/>
    <property type="evidence" value="ECO:0007669"/>
    <property type="project" value="UniProtKB-UniRule"/>
</dbReference>
<dbReference type="CDD" id="cd00432">
    <property type="entry name" value="Ribosomal_L18_L5e"/>
    <property type="match status" value="1"/>
</dbReference>
<dbReference type="FunFam" id="3.30.420.100:FF:000001">
    <property type="entry name" value="50S ribosomal protein L18"/>
    <property type="match status" value="1"/>
</dbReference>
<dbReference type="Gene3D" id="3.30.420.100">
    <property type="match status" value="1"/>
</dbReference>
<dbReference type="HAMAP" id="MF_01337_B">
    <property type="entry name" value="Ribosomal_uL18_B"/>
    <property type="match status" value="1"/>
</dbReference>
<dbReference type="InterPro" id="IPR004389">
    <property type="entry name" value="Ribosomal_uL18_bac-type"/>
</dbReference>
<dbReference type="InterPro" id="IPR005484">
    <property type="entry name" value="Ribosomal_uL18_bac/euk"/>
</dbReference>
<dbReference type="NCBIfam" id="TIGR00060">
    <property type="entry name" value="L18_bact"/>
    <property type="match status" value="1"/>
</dbReference>
<dbReference type="PANTHER" id="PTHR12899">
    <property type="entry name" value="39S RIBOSOMAL PROTEIN L18, MITOCHONDRIAL"/>
    <property type="match status" value="1"/>
</dbReference>
<dbReference type="PANTHER" id="PTHR12899:SF3">
    <property type="entry name" value="LARGE RIBOSOMAL SUBUNIT PROTEIN UL18M"/>
    <property type="match status" value="1"/>
</dbReference>
<dbReference type="Pfam" id="PF00861">
    <property type="entry name" value="Ribosomal_L18p"/>
    <property type="match status" value="1"/>
</dbReference>
<dbReference type="SUPFAM" id="SSF53137">
    <property type="entry name" value="Translational machinery components"/>
    <property type="match status" value="1"/>
</dbReference>
<organism>
    <name type="scientific">Clostridium botulinum (strain Loch Maree / Type A3)</name>
    <dbReference type="NCBI Taxonomy" id="498214"/>
    <lineage>
        <taxon>Bacteria</taxon>
        <taxon>Bacillati</taxon>
        <taxon>Bacillota</taxon>
        <taxon>Clostridia</taxon>
        <taxon>Eubacteriales</taxon>
        <taxon>Clostridiaceae</taxon>
        <taxon>Clostridium</taxon>
    </lineage>
</organism>
<name>RL18_CLOBM</name>
<gene>
    <name evidence="1" type="primary">rplR</name>
    <name type="ordered locus">CLK_2908</name>
</gene>
<comment type="function">
    <text evidence="1">This is one of the proteins that bind and probably mediate the attachment of the 5S RNA into the large ribosomal subunit, where it forms part of the central protuberance.</text>
</comment>
<comment type="subunit">
    <text evidence="1">Part of the 50S ribosomal subunit; part of the 5S rRNA/L5/L18/L25 subcomplex. Contacts the 5S and 23S rRNAs.</text>
</comment>
<comment type="similarity">
    <text evidence="1">Belongs to the universal ribosomal protein uL18 family.</text>
</comment>
<accession>B1KSK9</accession>
<keyword id="KW-0687">Ribonucleoprotein</keyword>
<keyword id="KW-0689">Ribosomal protein</keyword>
<keyword id="KW-0694">RNA-binding</keyword>
<keyword id="KW-0699">rRNA-binding</keyword>
<evidence type="ECO:0000255" key="1">
    <source>
        <dbReference type="HAMAP-Rule" id="MF_01337"/>
    </source>
</evidence>
<evidence type="ECO:0000305" key="2"/>
<proteinExistence type="inferred from homology"/>
<protein>
    <recommendedName>
        <fullName evidence="1">Large ribosomal subunit protein uL18</fullName>
    </recommendedName>
    <alternativeName>
        <fullName evidence="2">50S ribosomal protein L18</fullName>
    </alternativeName>
</protein>
<reference key="1">
    <citation type="journal article" date="2007" name="PLoS ONE">
        <title>Analysis of the neurotoxin complex genes in Clostridium botulinum A1-A4 and B1 strains: BoNT/A3, /Ba4 and /B1 clusters are located within plasmids.</title>
        <authorList>
            <person name="Smith T.J."/>
            <person name="Hill K.K."/>
            <person name="Foley B.T."/>
            <person name="Detter J.C."/>
            <person name="Munk A.C."/>
            <person name="Bruce D.C."/>
            <person name="Doggett N.A."/>
            <person name="Smith L.A."/>
            <person name="Marks J.D."/>
            <person name="Xie G."/>
            <person name="Brettin T.S."/>
        </authorList>
    </citation>
    <scope>NUCLEOTIDE SEQUENCE [LARGE SCALE GENOMIC DNA]</scope>
    <source>
        <strain>Loch Maree / Type A3</strain>
    </source>
</reference>
<feature type="chain" id="PRO_1000142645" description="Large ribosomal subunit protein uL18">
    <location>
        <begin position="1"/>
        <end position="119"/>
    </location>
</feature>